<reference key="1">
    <citation type="journal article" date="2006" name="PLoS Genet.">
        <title>The complete genome sequence and comparative genome analysis of the high pathogenicity Yersinia enterocolitica strain 8081.</title>
        <authorList>
            <person name="Thomson N.R."/>
            <person name="Howard S."/>
            <person name="Wren B.W."/>
            <person name="Holden M.T.G."/>
            <person name="Crossman L."/>
            <person name="Challis G.L."/>
            <person name="Churcher C."/>
            <person name="Mungall K."/>
            <person name="Brooks K."/>
            <person name="Chillingworth T."/>
            <person name="Feltwell T."/>
            <person name="Abdellah Z."/>
            <person name="Hauser H."/>
            <person name="Jagels K."/>
            <person name="Maddison M."/>
            <person name="Moule S."/>
            <person name="Sanders M."/>
            <person name="Whitehead S."/>
            <person name="Quail M.A."/>
            <person name="Dougan G."/>
            <person name="Parkhill J."/>
            <person name="Prentice M.B."/>
        </authorList>
    </citation>
    <scope>NUCLEOTIDE SEQUENCE [LARGE SCALE GENOMIC DNA]</scope>
    <source>
        <strain>NCTC 13174 / 8081</strain>
    </source>
</reference>
<organism>
    <name type="scientific">Yersinia enterocolitica serotype O:8 / biotype 1B (strain NCTC 13174 / 8081)</name>
    <dbReference type="NCBI Taxonomy" id="393305"/>
    <lineage>
        <taxon>Bacteria</taxon>
        <taxon>Pseudomonadati</taxon>
        <taxon>Pseudomonadota</taxon>
        <taxon>Gammaproteobacteria</taxon>
        <taxon>Enterobacterales</taxon>
        <taxon>Yersiniaceae</taxon>
        <taxon>Yersinia</taxon>
    </lineage>
</organism>
<protein>
    <recommendedName>
        <fullName evidence="1">GTPase Der</fullName>
    </recommendedName>
    <alternativeName>
        <fullName evidence="1">GTP-binding protein EngA</fullName>
    </alternativeName>
</protein>
<proteinExistence type="inferred from homology"/>
<gene>
    <name evidence="1" type="primary">der</name>
    <name type="synonym">engA</name>
    <name type="ordered locus">YE1077</name>
</gene>
<comment type="function">
    <text evidence="1">GTPase that plays an essential role in the late steps of ribosome biogenesis.</text>
</comment>
<comment type="subunit">
    <text evidence="1">Associates with the 50S ribosomal subunit.</text>
</comment>
<comment type="similarity">
    <text evidence="1">Belongs to the TRAFAC class TrmE-Era-EngA-EngB-Septin-like GTPase superfamily. EngA (Der) GTPase family.</text>
</comment>
<sequence length="494" mass="54801">MIPVIALVGRPNVGKSTLFNRLTHTRDALVADFPGLTRDRKYGRAEVEGHEFIVIDTGGIDGTEDGVETKMAGQSLLAIEEADIVLFMVDARAGLMPADQGIAQHLRSREKATFLVANKTDGIDPDTATADFYSLGLGEVHAIAASHGRGVTQLIEDVMAPYMDAEEPEAELTDEEANAAYWAAQEADEDEIPEDEEDDFDPLSLPIKLAIVGRPNVGKSTLTNRILGEDRVVVYDMPGTTRDSIYIPMTRDEREYILIDTAGVRKRGKITEAVEKFSVIKTLQAIEDSNVVLLVIDARDGISDQDLSLLGFILNSGRSLVIAVNKWDGMSEEARAQVKDMLDLRLGFVDFARIHFISALHGSGVGNLFESIQEAYDCSTKRVGTSLLTRIMQMAEEDHQPPLVRGRRVKLKYAHAGGYNPPIVVIHGNQVTDLSDSYKRYLMNYFRRSLKVMGTPIRIQFKEGENPFAGKRNTLTPNQMRKRKRLMSHLKKGK</sequence>
<accession>A1JKS6</accession>
<feature type="chain" id="PRO_1000011785" description="GTPase Der">
    <location>
        <begin position="1"/>
        <end position="494"/>
    </location>
</feature>
<feature type="domain" description="EngA-type G 1">
    <location>
        <begin position="3"/>
        <end position="166"/>
    </location>
</feature>
<feature type="domain" description="EngA-type G 2">
    <location>
        <begin position="207"/>
        <end position="380"/>
    </location>
</feature>
<feature type="domain" description="KH-like" evidence="1">
    <location>
        <begin position="381"/>
        <end position="465"/>
    </location>
</feature>
<feature type="binding site" evidence="1">
    <location>
        <begin position="9"/>
        <end position="16"/>
    </location>
    <ligand>
        <name>GTP</name>
        <dbReference type="ChEBI" id="CHEBI:37565"/>
        <label>1</label>
    </ligand>
</feature>
<feature type="binding site" evidence="1">
    <location>
        <begin position="56"/>
        <end position="60"/>
    </location>
    <ligand>
        <name>GTP</name>
        <dbReference type="ChEBI" id="CHEBI:37565"/>
        <label>1</label>
    </ligand>
</feature>
<feature type="binding site" evidence="1">
    <location>
        <begin position="118"/>
        <end position="121"/>
    </location>
    <ligand>
        <name>GTP</name>
        <dbReference type="ChEBI" id="CHEBI:37565"/>
        <label>1</label>
    </ligand>
</feature>
<feature type="binding site" evidence="1">
    <location>
        <begin position="213"/>
        <end position="220"/>
    </location>
    <ligand>
        <name>GTP</name>
        <dbReference type="ChEBI" id="CHEBI:37565"/>
        <label>2</label>
    </ligand>
</feature>
<feature type="binding site" evidence="1">
    <location>
        <begin position="260"/>
        <end position="264"/>
    </location>
    <ligand>
        <name>GTP</name>
        <dbReference type="ChEBI" id="CHEBI:37565"/>
        <label>2</label>
    </ligand>
</feature>
<feature type="binding site" evidence="1">
    <location>
        <begin position="325"/>
        <end position="328"/>
    </location>
    <ligand>
        <name>GTP</name>
        <dbReference type="ChEBI" id="CHEBI:37565"/>
        <label>2</label>
    </ligand>
</feature>
<name>DER_YERE8</name>
<dbReference type="EMBL" id="AM286415">
    <property type="protein sequence ID" value="CAL11174.1"/>
    <property type="molecule type" value="Genomic_DNA"/>
</dbReference>
<dbReference type="RefSeq" id="WP_005172557.1">
    <property type="nucleotide sequence ID" value="NC_008800.1"/>
</dbReference>
<dbReference type="RefSeq" id="YP_001005409.1">
    <property type="nucleotide sequence ID" value="NC_008800.1"/>
</dbReference>
<dbReference type="SMR" id="A1JKS6"/>
<dbReference type="KEGG" id="yen:YE1077"/>
<dbReference type="PATRIC" id="fig|393305.7.peg.1175"/>
<dbReference type="eggNOG" id="COG1160">
    <property type="taxonomic scope" value="Bacteria"/>
</dbReference>
<dbReference type="HOGENOM" id="CLU_016077_5_1_6"/>
<dbReference type="OrthoDB" id="9805918at2"/>
<dbReference type="Proteomes" id="UP000000642">
    <property type="component" value="Chromosome"/>
</dbReference>
<dbReference type="GO" id="GO:0005525">
    <property type="term" value="F:GTP binding"/>
    <property type="evidence" value="ECO:0007669"/>
    <property type="project" value="UniProtKB-UniRule"/>
</dbReference>
<dbReference type="GO" id="GO:0043022">
    <property type="term" value="F:ribosome binding"/>
    <property type="evidence" value="ECO:0007669"/>
    <property type="project" value="TreeGrafter"/>
</dbReference>
<dbReference type="GO" id="GO:0042254">
    <property type="term" value="P:ribosome biogenesis"/>
    <property type="evidence" value="ECO:0007669"/>
    <property type="project" value="UniProtKB-KW"/>
</dbReference>
<dbReference type="CDD" id="cd01894">
    <property type="entry name" value="EngA1"/>
    <property type="match status" value="1"/>
</dbReference>
<dbReference type="CDD" id="cd01895">
    <property type="entry name" value="EngA2"/>
    <property type="match status" value="1"/>
</dbReference>
<dbReference type="FunFam" id="3.30.300.20:FF:000004">
    <property type="entry name" value="GTPase Der"/>
    <property type="match status" value="1"/>
</dbReference>
<dbReference type="FunFam" id="3.40.50.300:FF:000040">
    <property type="entry name" value="GTPase Der"/>
    <property type="match status" value="1"/>
</dbReference>
<dbReference type="FunFam" id="3.40.50.300:FF:000057">
    <property type="entry name" value="GTPase Der"/>
    <property type="match status" value="1"/>
</dbReference>
<dbReference type="Gene3D" id="3.30.300.20">
    <property type="match status" value="1"/>
</dbReference>
<dbReference type="Gene3D" id="3.40.50.300">
    <property type="entry name" value="P-loop containing nucleotide triphosphate hydrolases"/>
    <property type="match status" value="2"/>
</dbReference>
<dbReference type="HAMAP" id="MF_00195">
    <property type="entry name" value="GTPase_Der"/>
    <property type="match status" value="1"/>
</dbReference>
<dbReference type="InterPro" id="IPR031166">
    <property type="entry name" value="G_ENGA"/>
</dbReference>
<dbReference type="InterPro" id="IPR006073">
    <property type="entry name" value="GTP-bd"/>
</dbReference>
<dbReference type="InterPro" id="IPR016484">
    <property type="entry name" value="GTPase_Der"/>
</dbReference>
<dbReference type="InterPro" id="IPR032859">
    <property type="entry name" value="KH_dom-like"/>
</dbReference>
<dbReference type="InterPro" id="IPR015946">
    <property type="entry name" value="KH_dom-like_a/b"/>
</dbReference>
<dbReference type="InterPro" id="IPR027417">
    <property type="entry name" value="P-loop_NTPase"/>
</dbReference>
<dbReference type="InterPro" id="IPR005225">
    <property type="entry name" value="Small_GTP-bd"/>
</dbReference>
<dbReference type="NCBIfam" id="TIGR03594">
    <property type="entry name" value="GTPase_EngA"/>
    <property type="match status" value="1"/>
</dbReference>
<dbReference type="NCBIfam" id="TIGR00231">
    <property type="entry name" value="small_GTP"/>
    <property type="match status" value="2"/>
</dbReference>
<dbReference type="PANTHER" id="PTHR43834">
    <property type="entry name" value="GTPASE DER"/>
    <property type="match status" value="1"/>
</dbReference>
<dbReference type="PANTHER" id="PTHR43834:SF6">
    <property type="entry name" value="GTPASE DER"/>
    <property type="match status" value="1"/>
</dbReference>
<dbReference type="Pfam" id="PF14714">
    <property type="entry name" value="KH_dom-like"/>
    <property type="match status" value="1"/>
</dbReference>
<dbReference type="Pfam" id="PF01926">
    <property type="entry name" value="MMR_HSR1"/>
    <property type="match status" value="2"/>
</dbReference>
<dbReference type="PIRSF" id="PIRSF006485">
    <property type="entry name" value="GTP-binding_EngA"/>
    <property type="match status" value="1"/>
</dbReference>
<dbReference type="PRINTS" id="PR00326">
    <property type="entry name" value="GTP1OBG"/>
</dbReference>
<dbReference type="SUPFAM" id="SSF52540">
    <property type="entry name" value="P-loop containing nucleoside triphosphate hydrolases"/>
    <property type="match status" value="2"/>
</dbReference>
<dbReference type="PROSITE" id="PS51712">
    <property type="entry name" value="G_ENGA"/>
    <property type="match status" value="2"/>
</dbReference>
<keyword id="KW-0342">GTP-binding</keyword>
<keyword id="KW-0547">Nucleotide-binding</keyword>
<keyword id="KW-0677">Repeat</keyword>
<keyword id="KW-0690">Ribosome biogenesis</keyword>
<evidence type="ECO:0000255" key="1">
    <source>
        <dbReference type="HAMAP-Rule" id="MF_00195"/>
    </source>
</evidence>